<name>IPA9_SHIBS</name>
<proteinExistence type="inferred from homology"/>
<gene>
    <name type="primary">ipaH9.8</name>
    <name type="ordered locus">SBO_P113</name>
</gene>
<reference key="1">
    <citation type="journal article" date="2005" name="Nucleic Acids Res.">
        <title>Genome dynamics and diversity of Shigella species, the etiologic agents of bacillary dysentery.</title>
        <authorList>
            <person name="Yang F."/>
            <person name="Yang J."/>
            <person name="Zhang X."/>
            <person name="Chen L."/>
            <person name="Jiang Y."/>
            <person name="Yan Y."/>
            <person name="Tang X."/>
            <person name="Wang J."/>
            <person name="Xiong Z."/>
            <person name="Dong J."/>
            <person name="Xue Y."/>
            <person name="Zhu Y."/>
            <person name="Xu X."/>
            <person name="Sun L."/>
            <person name="Chen S."/>
            <person name="Nie H."/>
            <person name="Peng J."/>
            <person name="Xu J."/>
            <person name="Wang Y."/>
            <person name="Yuan Z."/>
            <person name="Wen Y."/>
            <person name="Yao Z."/>
            <person name="Shen Y."/>
            <person name="Qiang B."/>
            <person name="Hou Y."/>
            <person name="Yu J."/>
            <person name="Jin Q."/>
        </authorList>
    </citation>
    <scope>NUCLEOTIDE SEQUENCE [LARGE SCALE GENOMIC DNA]</scope>
    <source>
        <strain>Sb227</strain>
    </source>
</reference>
<dbReference type="EC" id="2.3.2.27" evidence="3"/>
<dbReference type="EMBL" id="CP000037">
    <property type="protein sequence ID" value="ABB68985.1"/>
    <property type="molecule type" value="Genomic_DNA"/>
</dbReference>
<dbReference type="RefSeq" id="WP_000936800.1">
    <property type="nucleotide sequence ID" value="NC_007608.1"/>
</dbReference>
<dbReference type="SMR" id="Q31SH3"/>
<dbReference type="KEGG" id="sbo:SBO_P113"/>
<dbReference type="HOGENOM" id="CLU_018533_2_0_6"/>
<dbReference type="Proteomes" id="UP000007067">
    <property type="component" value="Plasmid pSB4_227"/>
</dbReference>
<dbReference type="GO" id="GO:0005576">
    <property type="term" value="C:extracellular region"/>
    <property type="evidence" value="ECO:0000250"/>
    <property type="project" value="UniProtKB"/>
</dbReference>
<dbReference type="GO" id="GO:0044164">
    <property type="term" value="C:host cell cytosol"/>
    <property type="evidence" value="ECO:0000250"/>
    <property type="project" value="UniProtKB"/>
</dbReference>
<dbReference type="GO" id="GO:0042025">
    <property type="term" value="C:host cell nucleus"/>
    <property type="evidence" value="ECO:0000250"/>
    <property type="project" value="UniProtKB"/>
</dbReference>
<dbReference type="GO" id="GO:0061630">
    <property type="term" value="F:ubiquitin protein ligase activity"/>
    <property type="evidence" value="ECO:0000250"/>
    <property type="project" value="UniProtKB"/>
</dbReference>
<dbReference type="GO" id="GO:0004842">
    <property type="term" value="F:ubiquitin-protein transferase activity"/>
    <property type="evidence" value="ECO:0000250"/>
    <property type="project" value="UniProtKB"/>
</dbReference>
<dbReference type="GO" id="GO:0044314">
    <property type="term" value="P:protein K27-linked ubiquitination"/>
    <property type="evidence" value="ECO:0000250"/>
    <property type="project" value="UniProtKB"/>
</dbReference>
<dbReference type="GO" id="GO:0070936">
    <property type="term" value="P:protein K48-linked ubiquitination"/>
    <property type="evidence" value="ECO:0000250"/>
    <property type="project" value="UniProtKB"/>
</dbReference>
<dbReference type="GO" id="GO:0052170">
    <property type="term" value="P:symbiont-mediated suppression of host innate immune response"/>
    <property type="evidence" value="ECO:0000250"/>
    <property type="project" value="UniProtKB"/>
</dbReference>
<dbReference type="FunFam" id="1.20.58.90:FF:000007">
    <property type="entry name" value="E3 ubiquitin-protein ligase ipaH9.8"/>
    <property type="match status" value="1"/>
</dbReference>
<dbReference type="FunFam" id="1.20.1270.130:FF:000001">
    <property type="entry name" value="Invasion plasmid antigen IpaH"/>
    <property type="match status" value="1"/>
</dbReference>
<dbReference type="FunFam" id="1.20.58.360:FF:000001">
    <property type="entry name" value="Probable E3 ubiquitin-protein ligase ipaH7.8"/>
    <property type="match status" value="1"/>
</dbReference>
<dbReference type="Gene3D" id="1.20.58.90">
    <property type="match status" value="1"/>
</dbReference>
<dbReference type="Gene3D" id="3.80.10.10">
    <property type="entry name" value="Ribonuclease Inhibitor"/>
    <property type="match status" value="1"/>
</dbReference>
<dbReference type="Gene3D" id="1.20.58.360">
    <property type="entry name" value="Shigella T3SS effector IpaH defines"/>
    <property type="match status" value="1"/>
</dbReference>
<dbReference type="Gene3D" id="1.20.1270.130">
    <property type="entry name" value="Shigella T3SS effector IpaH domain"/>
    <property type="match status" value="1"/>
</dbReference>
<dbReference type="InterPro" id="IPR051071">
    <property type="entry name" value="LRR-bact_E3_ubiq_ligases"/>
</dbReference>
<dbReference type="InterPro" id="IPR032675">
    <property type="entry name" value="LRR_dom_sf"/>
</dbReference>
<dbReference type="InterPro" id="IPR032674">
    <property type="entry name" value="LRR_E3_ligase_N"/>
</dbReference>
<dbReference type="InterPro" id="IPR029487">
    <property type="entry name" value="NEL_dom"/>
</dbReference>
<dbReference type="NCBIfam" id="NF046045">
    <property type="entry name" value="IpaH_Shig"/>
    <property type="match status" value="1"/>
</dbReference>
<dbReference type="PANTHER" id="PTHR47114">
    <property type="match status" value="1"/>
</dbReference>
<dbReference type="PANTHER" id="PTHR47114:SF2">
    <property type="entry name" value="OLIGODENDROCYTE-MYELIN GLYCOPROTEIN"/>
    <property type="match status" value="1"/>
</dbReference>
<dbReference type="Pfam" id="PF12468">
    <property type="entry name" value="LRR_TTSS"/>
    <property type="match status" value="1"/>
</dbReference>
<dbReference type="Pfam" id="PF14496">
    <property type="entry name" value="NEL"/>
    <property type="match status" value="1"/>
</dbReference>
<dbReference type="SMART" id="SM00364">
    <property type="entry name" value="LRR_BAC"/>
    <property type="match status" value="5"/>
</dbReference>
<dbReference type="SUPFAM" id="SSF52058">
    <property type="entry name" value="L domain-like"/>
    <property type="match status" value="1"/>
</dbReference>
<dbReference type="PROSITE" id="PS52053">
    <property type="entry name" value="NEL"/>
    <property type="match status" value="1"/>
</dbReference>
<feature type="chain" id="PRO_0000395757" description="E3 ubiquitin-protein ligase ipaH9.8">
    <location>
        <begin position="1"/>
        <end position="545"/>
    </location>
</feature>
<feature type="repeat" description="LRR 1">
    <location>
        <begin position="57"/>
        <end position="77"/>
    </location>
</feature>
<feature type="repeat" description="LRR 2">
    <location>
        <begin position="78"/>
        <end position="99"/>
    </location>
</feature>
<feature type="repeat" description="LRR 3">
    <location>
        <begin position="100"/>
        <end position="117"/>
    </location>
</feature>
<feature type="repeat" description="LRR 4">
    <location>
        <begin position="118"/>
        <end position="139"/>
    </location>
</feature>
<feature type="repeat" description="LRR 5">
    <location>
        <begin position="140"/>
        <end position="157"/>
    </location>
</feature>
<feature type="repeat" description="LRR 6">
    <location>
        <begin position="158"/>
        <end position="179"/>
    </location>
</feature>
<feature type="repeat" description="LRR 7">
    <location>
        <begin position="182"/>
        <end position="203"/>
    </location>
</feature>
<feature type="repeat" description="LRR 8">
    <location>
        <begin position="205"/>
        <end position="228"/>
    </location>
</feature>
<feature type="domain" description="NEL" evidence="4">
    <location>
        <begin position="253"/>
        <end position="545"/>
    </location>
</feature>
<feature type="region of interest" description="Interaction with target proteins" evidence="2">
    <location>
        <begin position="1"/>
        <end position="242"/>
    </location>
</feature>
<feature type="region of interest" description="Linker" evidence="2">
    <location>
        <begin position="243"/>
        <end position="250"/>
    </location>
</feature>
<feature type="region of interest" description="E3 ubiquitin-protein ligase catalytic domain" evidence="2">
    <location>
        <begin position="251"/>
        <end position="545"/>
    </location>
</feature>
<feature type="active site" description="Glycyl thioester intermediate" evidence="4">
    <location>
        <position position="337"/>
    </location>
</feature>
<protein>
    <recommendedName>
        <fullName>E3 ubiquitin-protein ligase ipaH9.8</fullName>
        <ecNumber evidence="3">2.3.2.27</ecNumber>
    </recommendedName>
    <alternativeName>
        <fullName>Invasion plasmid antigen ipaH9.8</fullName>
    </alternativeName>
</protein>
<evidence type="ECO:0000250" key="1"/>
<evidence type="ECO:0000250" key="2">
    <source>
        <dbReference type="UniProtKB" id="P0CE12"/>
    </source>
</evidence>
<evidence type="ECO:0000250" key="3">
    <source>
        <dbReference type="UniProtKB" id="Q8VSC3"/>
    </source>
</evidence>
<evidence type="ECO:0000255" key="4">
    <source>
        <dbReference type="PROSITE-ProRule" id="PRU01398"/>
    </source>
</evidence>
<evidence type="ECO:0000305" key="5"/>
<comment type="function">
    <text evidence="3">Effector E3 ubiquitin ligase that interferes with host's ubiquitination pathway and modulates the acute inflammatory responses, thus facilitating bacterial colonization within the host cell. Interacts with IKBKG (NEMO) and TNIP1 (ABIN-1), a ubiquitin-binding adapter protein, which results in TNIP1-dependent 'Lys-27'-linked polyubiquitination of IKBKG. Consequently, polyubiquitinated IKBKG undergoes proteasome-dependent degradation, which perturbs NF-kappa-B activation during bacterial infection. Mediates polyubiquitination of host U2AF1, leading to its proteasomal degradation. Catalyzes 'Lys-48'-linked polyubiquitination and subsequent degradation of a subset of host guanylate-binding proteins (GBP1, GBP2, GBP4 and GBP6), thereby suppressing host cell defense. In contrast, host GBP3 and GBP7 are not ubiquitinated by IpaH9.8. Uses UBE2D2 (UBCH5B) as an E2 ubiquitin-conjugating enzyme.</text>
</comment>
<comment type="catalytic activity">
    <reaction evidence="3">
        <text>S-ubiquitinyl-[E2 ubiquitin-conjugating enzyme]-L-cysteine + [acceptor protein]-L-lysine = [E2 ubiquitin-conjugating enzyme]-L-cysteine + N(6)-ubiquitinyl-[acceptor protein]-L-lysine.</text>
        <dbReference type="EC" id="2.3.2.27"/>
    </reaction>
</comment>
<comment type="activity regulation">
    <text evidence="3">Exists in an autoinhibited state in the absence of substrate protein, due to interactions of the leucine-rich repeats with NEL domain. Is activated upon binding to a substrate protein.</text>
</comment>
<comment type="subunit">
    <text evidence="3">Also interacts with human and mouse U2AF1 (U2AF35).</text>
</comment>
<comment type="subcellular location">
    <subcellularLocation>
        <location evidence="3">Secreted</location>
    </subcellularLocation>
    <subcellularLocation>
        <location evidence="3">Host cytoplasm</location>
    </subcellularLocation>
    <subcellularLocation>
        <location evidence="3">Host nucleus</location>
    </subcellularLocation>
    <text evidence="3">Secreted via Mxi-Spa type III secretion system (T3SS), and delivered into the host cytoplasm. Transported into the host nucleus. This transport is independent of cytosolic factors, but dependent on temperature and partly on ATP/GTP.</text>
</comment>
<comment type="domain">
    <text evidence="3">The LRR (leucine-rich repeat) repeats are involved in substrate recognition with target proteins.</text>
</comment>
<comment type="PTM">
    <text evidence="1">Ubiquitinated in the presence of host E1 ubiquitin-activating enzyme, E2 ubiquitin-conjugating enzyme and ubiquitin.</text>
</comment>
<comment type="similarity">
    <text evidence="4 5">Belongs to the LRR-containing bacterial E3 ligase family.</text>
</comment>
<accession>Q31SH3</accession>
<keyword id="KW-1035">Host cytoplasm</keyword>
<keyword id="KW-1048">Host nucleus</keyword>
<keyword id="KW-0433">Leucine-rich repeat</keyword>
<keyword id="KW-0614">Plasmid</keyword>
<keyword id="KW-0677">Repeat</keyword>
<keyword id="KW-0964">Secreted</keyword>
<keyword id="KW-0808">Transferase</keyword>
<keyword id="KW-0832">Ubl conjugation</keyword>
<keyword id="KW-0833">Ubl conjugation pathway</keyword>
<keyword id="KW-0843">Virulence</keyword>
<organism>
    <name type="scientific">Shigella boydii serotype 4 (strain Sb227)</name>
    <dbReference type="NCBI Taxonomy" id="300268"/>
    <lineage>
        <taxon>Bacteria</taxon>
        <taxon>Pseudomonadati</taxon>
        <taxon>Pseudomonadota</taxon>
        <taxon>Gammaproteobacteria</taxon>
        <taxon>Enterobacterales</taxon>
        <taxon>Enterobacteriaceae</taxon>
        <taxon>Shigella</taxon>
    </lineage>
</organism>
<sequence>MLPINNNFSLPQNSFYNTISGTYADYFSAWDKWEKQALPGEERDEAVSRLKECLINNSDELRLDRLNLSSLPDNLPAQITLLNVSYNQLTNLPELPVTLKKLYSASNKLSELPVLPPALESLQVQHNELENLPALPDSLLTMNISYNEIVSLPSLPLALKNLRATRNFLTELPAFSEGNNPVVREYFFDRNQISHIPESILNLRNECSIHISDNPLSSHALQALQRLTSSPDYHGPRIYFSMSDGQQNTLHRPLADAVTAWFPENKQSDVSQIWHAFEHEEHANTFSAFLDRLSDTVSARNTSGFREQVAAWLEKLSASAELRQQSFAVAADATESCEDRVALTWNNLRKTLLVHQASEGLFDNDTGALLSLGREMFRLEILEDIARDKVRTLHFVDEIEVYLAFQTMLAEKLQLSTAVKEMRFYGVSGVTANDLRTAEAMVRSREENEFTDWFSLWGPWHAVLKRTEADRWALAEEQKYEMLENEYPQRVADRLKASGLSGDADAEREAGAQVMRETEQQIYRQLTDEVLALRLSENGSQLHHS</sequence>
<geneLocation type="plasmid">
    <name>pSB4_227</name>
</geneLocation>